<keyword id="KW-0025">Alternative splicing</keyword>
<keyword id="KW-0966">Cell projection</keyword>
<keyword id="KW-0903">Direct protein sequencing</keyword>
<keyword id="KW-0225">Disease variant</keyword>
<keyword id="KW-0272">Extracellular matrix</keyword>
<keyword id="KW-0325">Glycoprotein</keyword>
<keyword id="KW-0358">Heparin-binding</keyword>
<keyword id="KW-0373">Hyaluronic acid</keyword>
<keyword id="KW-1267">Proteomics identification</keyword>
<keyword id="KW-0675">Receptor</keyword>
<keyword id="KW-1185">Reference proteome</keyword>
<keyword id="KW-0677">Repeat</keyword>
<keyword id="KW-0682">Retinitis pigmentosa</keyword>
<keyword id="KW-0964">Secreted</keyword>
<keyword id="KW-0730">Sialic acid</keyword>
<keyword id="KW-0732">Signal</keyword>
<comment type="function">
    <text evidence="1 15">Chondroitin sulfate-, heparin- and hyaluronan-binding protein (By similarity). May serve to form a basic macromolecular scaffold comprising the insoluble interphotoreceptor matrix (PubMed:9813076).</text>
</comment>
<comment type="subcellular location">
    <subcellularLocation>
        <location evidence="11">Cell projection</location>
        <location evidence="11">Cilium</location>
        <location evidence="11">Photoreceptor outer segment</location>
    </subcellularLocation>
    <subcellularLocation>
        <location evidence="11 14 15">Secreted</location>
        <location evidence="11 14 15">Extracellular space</location>
        <location evidence="11 14 15">Extracellular matrix</location>
        <location evidence="11 14 15">Interphotoreceptor matrix</location>
    </subcellularLocation>
    <subcellularLocation>
        <location evidence="2">Photoreceptor inner segment</location>
    </subcellularLocation>
</comment>
<comment type="alternative products">
    <event type="alternative splicing"/>
    <isoform>
        <id>Q17R60-1</id>
        <name>1</name>
        <sequence type="displayed"/>
    </isoform>
    <isoform>
        <id>Q17R60-2</id>
        <name>2</name>
        <sequence type="described" ref="VSP_055981 VSP_055982 VSP_055983"/>
    </isoform>
</comment>
<comment type="tissue specificity">
    <text evidence="5 11 14 15">Expressed in the retina (at protein level) (PubMed:10601738, PubMed:29777959). In the retina, specifically expressed by cone and rod photoreceptor cells (PubMed:9813076). Localizes to cone and rod photoreceptor cells surrounding the interphotoreceptor matrix of the retina (PubMed:9719680).</text>
</comment>
<comment type="developmental stage">
    <text evidence="11">Expressed in the retina lens at 6 weeks post-conception (WPC) (at protein level) (PubMed:29777959). Expressed in the neural retinal between 6 and 19 WPC (at protein level) (PubMed:29777959). Expressed in developing photoreceptors and emerging interphotoreceptor matrix between 12 and 19 WPC (at protein level) (PubMed:29777959).</text>
</comment>
<comment type="PTM">
    <text evidence="14">The N-terminus is blocked.</text>
</comment>
<comment type="PTM">
    <text evidence="14">Highly glycosylated (N- and O-linked carbohydrates and sialic acid).</text>
</comment>
<comment type="disease" evidence="8 9 12">
    <disease id="DI-04286">
        <name>Macular dystrophy, vitelliform, 4</name>
        <acronym>VMD4</acronym>
        <description>A form of macular dystrophy, a retinal disease in which various forms of deposits, pigmentary changes, and atrophic lesions are observed in the macula lutea. Vitelliform macular dystrophies are characterized by yellow, lipofuscin-containing deposits, usually localized at the center of the macula. VMD4 features include late-onset moderate visual impairment, small satellite drusen-like lesions in the foveal area, and preservation of retinal pigment epithelium reflectivity.</description>
        <dbReference type="MIM" id="616151"/>
    </disease>
    <text>The disease is caused by variants affecting the gene represented in this entry.</text>
</comment>
<comment type="disease" evidence="6 13">
    <disease id="DI-06234">
        <name>Retinitis pigmentosa 91</name>
        <acronym>RP91</acronym>
        <description>A form of retinitis pigmentosa, a retinal dystrophy belonging to the group of pigmentary retinopathies. Retinitis pigmentosa is characterized by retinal pigment deposits visible on fundus examination and primary loss of rod photoreceptor cells followed by secondary loss of cone photoreceptors. Patients typically have night vision blindness and loss of midperipheral visual field. RP91 is an autosomal dominant form with bone-spicule pigmentation, attenuation of retinal vessels, and optic disk pallor on funduscopy. Patients may also experience early macular involvement, with photophobia and reduced visual acuity, and some show a bull's eye pattern of macular atrophy.</description>
        <dbReference type="MIM" id="153870"/>
    </disease>
    <text>The disease is caused by variants affecting the gene represented in this entry.</text>
</comment>
<accession>Q17R60</accession>
<accession>A6NNZ6</accession>
<accession>O43686</accession>
<accession>O95094</accession>
<accession>Q68D53</accession>
<accession>Q9BWZ1</accession>
<feature type="signal peptide" evidence="3">
    <location>
        <begin position="1"/>
        <end position="20"/>
    </location>
</feature>
<feature type="chain" id="PRO_0000252238" description="Interphotoreceptor matrix proteoglycan 1" evidence="3">
    <location>
        <begin position="21"/>
        <end position="797"/>
    </location>
</feature>
<feature type="domain" description="SEA 1" evidence="4">
    <location>
        <begin position="232"/>
        <end position="354"/>
    </location>
</feature>
<feature type="domain" description="SEA 2" evidence="4">
    <location>
        <begin position="571"/>
        <end position="684"/>
    </location>
</feature>
<feature type="short sequence motif" description="Heparin- and hyaluronan-binding" evidence="1">
    <location>
        <begin position="621"/>
        <end position="629"/>
    </location>
</feature>
<feature type="glycosylation site" description="N-linked (GlcNAc...) asparagine" evidence="3">
    <location>
        <position position="42"/>
    </location>
</feature>
<feature type="glycosylation site" description="N-linked (GlcNAc...) asparagine" evidence="3">
    <location>
        <position position="143"/>
    </location>
</feature>
<feature type="glycosylation site" description="N-linked (GlcNAc...) asparagine" evidence="3">
    <location>
        <position position="191"/>
    </location>
</feature>
<feature type="glycosylation site" description="N-linked (GlcNAc...) asparagine" evidence="3">
    <location>
        <position position="215"/>
    </location>
</feature>
<feature type="glycosylation site" description="O-linked (GalNAc...) threonine" evidence="3">
    <location>
        <position position="403"/>
    </location>
</feature>
<feature type="glycosylation site" description="O-linked (GalNAc...) threonine" evidence="3">
    <location>
        <position position="421"/>
    </location>
</feature>
<feature type="glycosylation site" description="O-linked (GalNAc...) threonine" evidence="3">
    <location>
        <position position="432"/>
    </location>
</feature>
<feature type="glycosylation site" description="O-linked (GalNAc...) threonine" evidence="3">
    <location>
        <position position="442"/>
    </location>
</feature>
<feature type="glycosylation site" description="N-linked (GlcNAc...) asparagine" evidence="3">
    <location>
        <position position="592"/>
    </location>
</feature>
<feature type="glycosylation site" description="N-linked (GlcNAc...) asparagine" evidence="3">
    <location>
        <position position="616"/>
    </location>
</feature>
<feature type="glycosylation site" description="N-linked (GlcNAc...) asparagine" evidence="3">
    <location>
        <position position="630"/>
    </location>
</feature>
<feature type="glycosylation site" description="N-linked (GlcNAc...) asparagine" evidence="3">
    <location>
        <position position="648"/>
    </location>
</feature>
<feature type="splice variant" id="VSP_055981" description="In isoform 2." evidence="16">
    <location>
        <begin position="23"/>
        <end position="100"/>
    </location>
</feature>
<feature type="splice variant" id="VSP_055982" description="In isoform 2." evidence="16">
    <original>DVANVSLGPFPLTPDDTLLNEILDNTLNDTKMPTTERE</original>
    <variation>EKNKGKTKPFNILQFGNNHHEHLLPIFCLLSSIIYTYY</variation>
    <location>
        <begin position="188"/>
        <end position="225"/>
    </location>
</feature>
<feature type="splice variant" id="VSP_055983" description="In isoform 2." evidence="16">
    <location>
        <begin position="226"/>
        <end position="797"/>
    </location>
</feature>
<feature type="sequence variant" id="VAR_072668" description="In VMD4; uncertain significance; dbSNP:rs713993047." evidence="8 12">
    <original>L</original>
    <variation>P</variation>
    <location>
        <position position="154"/>
    </location>
</feature>
<feature type="sequence variant" id="VAR_082192" description="Found in a patient with vitelliform macular dystrophy; uncertain significance; dbSNP:rs713993045." evidence="10">
    <original>L</original>
    <variation>P</variation>
    <location>
        <position position="238"/>
    </location>
</feature>
<feature type="sequence variant" id="VAR_072669" description="In VMD4; dbSNP:rs713993045." evidence="8 9">
    <original>L</original>
    <variation>R</variation>
    <location>
        <position position="238"/>
    </location>
</feature>
<feature type="sequence variant" id="VAR_051069" description="In dbSNP:rs9443201.">
    <original>G</original>
    <variation>V</variation>
    <location>
        <position position="463"/>
    </location>
</feature>
<feature type="sequence variant" id="VAR_027793" description="In dbSNP:rs3734311." evidence="7">
    <original>H</original>
    <variation>D</variation>
    <location>
        <position position="518"/>
    </location>
</feature>
<feature type="sequence variant" id="VAR_051070" description="In dbSNP:rs3734312.">
    <original>K</original>
    <variation>R</variation>
    <location>
        <position position="569"/>
    </location>
</feature>
<feature type="sequence variant" id="VAR_072670" description="In RP91; dbSNP:rs1782008883." evidence="6 13">
    <original>L</original>
    <variation>P</variation>
    <location>
        <position position="579"/>
    </location>
</feature>
<feature type="sequence variant" id="VAR_086246" description="In RP91; uncertain significance; dbSNP:rs1781948884." evidence="13">
    <original>L</original>
    <variation>P</variation>
    <location>
        <position position="613"/>
    </location>
</feature>
<feature type="sequence variant" id="VAR_086247" description="In RP91; uncertain significance; dbSNP:rs1051579797." evidence="13">
    <original>L</original>
    <variation>F</variation>
    <location>
        <position position="626"/>
    </location>
</feature>
<feature type="sequence variant" id="VAR_027794" description="In dbSNP:rs10943299." evidence="7">
    <original>R</original>
    <variation>W</variation>
    <location>
        <position position="704"/>
    </location>
</feature>
<feature type="sequence variant" id="VAR_051071" description="In dbSNP:rs3734313.">
    <original>R</original>
    <variation>H</variation>
    <location>
        <position position="711"/>
    </location>
</feature>
<feature type="sequence variant" id="VAR_051072" description="In dbSNP:rs3778005.">
    <original>S</original>
    <variation>N</variation>
    <location>
        <position position="761"/>
    </location>
</feature>
<protein>
    <recommendedName>
        <fullName>Interphotoreceptor matrix proteoglycan 1</fullName>
    </recommendedName>
    <alternativeName>
        <fullName>Interphotoreceptor matrix proteoglycan of 150 kDa</fullName>
        <shortName>IPM-150</shortName>
    </alternativeName>
    <alternativeName>
        <fullName>Sialoprotein associated with cones and rods</fullName>
    </alternativeName>
</protein>
<dbReference type="EMBL" id="AF017776">
    <property type="protein sequence ID" value="AAC68835.1"/>
    <property type="molecule type" value="Genomic_DNA"/>
</dbReference>
<dbReference type="EMBL" id="AF017760">
    <property type="protein sequence ID" value="AAC68835.1"/>
    <property type="status" value="JOINED"/>
    <property type="molecule type" value="Genomic_DNA"/>
</dbReference>
<dbReference type="EMBL" id="AF017761">
    <property type="protein sequence ID" value="AAC68835.1"/>
    <property type="status" value="JOINED"/>
    <property type="molecule type" value="Genomic_DNA"/>
</dbReference>
<dbReference type="EMBL" id="AF017762">
    <property type="protein sequence ID" value="AAC68835.1"/>
    <property type="status" value="JOINED"/>
    <property type="molecule type" value="Genomic_DNA"/>
</dbReference>
<dbReference type="EMBL" id="AF017763">
    <property type="protein sequence ID" value="AAC68835.1"/>
    <property type="status" value="JOINED"/>
    <property type="molecule type" value="Genomic_DNA"/>
</dbReference>
<dbReference type="EMBL" id="AF017764">
    <property type="protein sequence ID" value="AAC68835.1"/>
    <property type="status" value="JOINED"/>
    <property type="molecule type" value="Genomic_DNA"/>
</dbReference>
<dbReference type="EMBL" id="AF017765">
    <property type="protein sequence ID" value="AAC68835.1"/>
    <property type="status" value="JOINED"/>
    <property type="molecule type" value="Genomic_DNA"/>
</dbReference>
<dbReference type="EMBL" id="AF017766">
    <property type="protein sequence ID" value="AAC68835.1"/>
    <property type="status" value="JOINED"/>
    <property type="molecule type" value="Genomic_DNA"/>
</dbReference>
<dbReference type="EMBL" id="AF017767">
    <property type="protein sequence ID" value="AAC68835.1"/>
    <property type="status" value="JOINED"/>
    <property type="molecule type" value="Genomic_DNA"/>
</dbReference>
<dbReference type="EMBL" id="AF017768">
    <property type="protein sequence ID" value="AAC68835.1"/>
    <property type="status" value="JOINED"/>
    <property type="molecule type" value="Genomic_DNA"/>
</dbReference>
<dbReference type="EMBL" id="AF017769">
    <property type="protein sequence ID" value="AAC68835.1"/>
    <property type="status" value="JOINED"/>
    <property type="molecule type" value="Genomic_DNA"/>
</dbReference>
<dbReference type="EMBL" id="AF017770">
    <property type="protein sequence ID" value="AAC68835.1"/>
    <property type="status" value="JOINED"/>
    <property type="molecule type" value="Genomic_DNA"/>
</dbReference>
<dbReference type="EMBL" id="AF017771">
    <property type="protein sequence ID" value="AAC68835.1"/>
    <property type="status" value="JOINED"/>
    <property type="molecule type" value="Genomic_DNA"/>
</dbReference>
<dbReference type="EMBL" id="AF017772">
    <property type="protein sequence ID" value="AAC68835.1"/>
    <property type="status" value="JOINED"/>
    <property type="molecule type" value="Genomic_DNA"/>
</dbReference>
<dbReference type="EMBL" id="AF017773">
    <property type="protein sequence ID" value="AAC68835.1"/>
    <property type="status" value="JOINED"/>
    <property type="molecule type" value="Genomic_DNA"/>
</dbReference>
<dbReference type="EMBL" id="AF017774">
    <property type="protein sequence ID" value="AAC68835.1"/>
    <property type="status" value="JOINED"/>
    <property type="molecule type" value="Genomic_DNA"/>
</dbReference>
<dbReference type="EMBL" id="AF017775">
    <property type="protein sequence ID" value="AAC68835.1"/>
    <property type="status" value="JOINED"/>
    <property type="molecule type" value="Genomic_DNA"/>
</dbReference>
<dbReference type="EMBL" id="AF047492">
    <property type="protein sequence ID" value="AAC03789.2"/>
    <property type="molecule type" value="mRNA"/>
</dbReference>
<dbReference type="EMBL" id="CR749572">
    <property type="protein sequence ID" value="CAH18367.1"/>
    <property type="molecule type" value="mRNA"/>
</dbReference>
<dbReference type="EMBL" id="AL356962">
    <property type="status" value="NOT_ANNOTATED_CDS"/>
    <property type="molecule type" value="Genomic_DNA"/>
</dbReference>
<dbReference type="EMBL" id="AL392166">
    <property type="status" value="NOT_ANNOTATED_CDS"/>
    <property type="molecule type" value="Genomic_DNA"/>
</dbReference>
<dbReference type="EMBL" id="CH471051">
    <property type="protein sequence ID" value="EAW48726.1"/>
    <property type="molecule type" value="Genomic_DNA"/>
</dbReference>
<dbReference type="EMBL" id="BC117450">
    <property type="protein sequence ID" value="AAI17451.1"/>
    <property type="molecule type" value="mRNA"/>
</dbReference>
<dbReference type="EMBL" id="BC117452">
    <property type="protein sequence ID" value="AAI17453.1"/>
    <property type="molecule type" value="mRNA"/>
</dbReference>
<dbReference type="CCDS" id="CCDS4985.1">
    <molecule id="Q17R60-1"/>
</dbReference>
<dbReference type="RefSeq" id="NP_001269297.1">
    <property type="nucleotide sequence ID" value="NM_001282368.1"/>
</dbReference>
<dbReference type="RefSeq" id="NP_001554.2">
    <molecule id="Q17R60-1"/>
    <property type="nucleotide sequence ID" value="NM_001563.3"/>
</dbReference>
<dbReference type="BioGRID" id="109830">
    <property type="interactions" value="3"/>
</dbReference>
<dbReference type="FunCoup" id="Q17R60">
    <property type="interactions" value="41"/>
</dbReference>
<dbReference type="IntAct" id="Q17R60">
    <property type="interactions" value="2"/>
</dbReference>
<dbReference type="STRING" id="9606.ENSP00000358966"/>
<dbReference type="GlyCosmos" id="Q17R60">
    <property type="glycosylation" value="12 sites, No reported glycans"/>
</dbReference>
<dbReference type="GlyGen" id="Q17R60">
    <property type="glycosylation" value="12 sites"/>
</dbReference>
<dbReference type="iPTMnet" id="Q17R60"/>
<dbReference type="PhosphoSitePlus" id="Q17R60"/>
<dbReference type="BioMuta" id="IMPG1"/>
<dbReference type="DMDM" id="115502232"/>
<dbReference type="MassIVE" id="Q17R60"/>
<dbReference type="PaxDb" id="9606-ENSP00000358966"/>
<dbReference type="PeptideAtlas" id="Q17R60"/>
<dbReference type="ProteomicsDB" id="61136">
    <molecule id="Q17R60-1"/>
</dbReference>
<dbReference type="ProteomicsDB" id="66053"/>
<dbReference type="Antibodypedia" id="55141">
    <property type="antibodies" value="37 antibodies from 12 providers"/>
</dbReference>
<dbReference type="DNASU" id="3617"/>
<dbReference type="Ensembl" id="ENST00000369950.8">
    <molecule id="Q17R60-1"/>
    <property type="protein sequence ID" value="ENSP00000358966.3"/>
    <property type="gene ID" value="ENSG00000112706.12"/>
</dbReference>
<dbReference type="GeneID" id="3617"/>
<dbReference type="KEGG" id="hsa:3617"/>
<dbReference type="MANE-Select" id="ENST00000369950.8">
    <property type="protein sequence ID" value="ENSP00000358966.3"/>
    <property type="RefSeq nucleotide sequence ID" value="NM_001563.4"/>
    <property type="RefSeq protein sequence ID" value="NP_001554.2"/>
</dbReference>
<dbReference type="UCSC" id="uc003pik.3">
    <molecule id="Q17R60-1"/>
    <property type="organism name" value="human"/>
</dbReference>
<dbReference type="AGR" id="HGNC:6055"/>
<dbReference type="CTD" id="3617"/>
<dbReference type="DisGeNET" id="3617"/>
<dbReference type="GeneCards" id="IMPG1"/>
<dbReference type="HGNC" id="HGNC:6055">
    <property type="gene designation" value="IMPG1"/>
</dbReference>
<dbReference type="HPA" id="ENSG00000112706">
    <property type="expression patterns" value="Tissue enriched (retina)"/>
</dbReference>
<dbReference type="MalaCards" id="IMPG1"/>
<dbReference type="MIM" id="153870">
    <property type="type" value="phenotype"/>
</dbReference>
<dbReference type="MIM" id="602870">
    <property type="type" value="gene"/>
</dbReference>
<dbReference type="MIM" id="616151">
    <property type="type" value="phenotype"/>
</dbReference>
<dbReference type="neXtProt" id="NX_Q17R60"/>
<dbReference type="OpenTargets" id="ENSG00000112706"/>
<dbReference type="Orphanet" id="99000">
    <property type="disease" value="Adult-onset foveomacular vitelliform dystrophy"/>
</dbReference>
<dbReference type="Orphanet" id="251287">
    <property type="disease" value="Benign concentric annular macular dystrophy"/>
</dbReference>
<dbReference type="Orphanet" id="791">
    <property type="disease" value="Retinitis pigmentosa"/>
</dbReference>
<dbReference type="PharmGKB" id="PA29865"/>
<dbReference type="VEuPathDB" id="HostDB:ENSG00000112706"/>
<dbReference type="eggNOG" id="ENOG502QTXX">
    <property type="taxonomic scope" value="Eukaryota"/>
</dbReference>
<dbReference type="GeneTree" id="ENSGT00530000063503"/>
<dbReference type="HOGENOM" id="CLU_005111_1_0_1"/>
<dbReference type="InParanoid" id="Q17R60"/>
<dbReference type="OMA" id="VCQQETF"/>
<dbReference type="OrthoDB" id="9908153at2759"/>
<dbReference type="PAN-GO" id="Q17R60">
    <property type="GO annotations" value="0 GO annotations based on evolutionary models"/>
</dbReference>
<dbReference type="PhylomeDB" id="Q17R60"/>
<dbReference type="TreeFam" id="TF331340"/>
<dbReference type="PathwayCommons" id="Q17R60"/>
<dbReference type="BioGRID-ORCS" id="3617">
    <property type="hits" value="4 hits in 1138 CRISPR screens"/>
</dbReference>
<dbReference type="ChiTaRS" id="IMPG1">
    <property type="organism name" value="human"/>
</dbReference>
<dbReference type="GeneWiki" id="IMPG1"/>
<dbReference type="GenomeRNAi" id="3617"/>
<dbReference type="Pharos" id="Q17R60">
    <property type="development level" value="Tbio"/>
</dbReference>
<dbReference type="PRO" id="PR:Q17R60"/>
<dbReference type="Proteomes" id="UP000005640">
    <property type="component" value="Chromosome 6"/>
</dbReference>
<dbReference type="RNAct" id="Q17R60">
    <property type="molecule type" value="protein"/>
</dbReference>
<dbReference type="Bgee" id="ENSG00000112706">
    <property type="expression patterns" value="Expressed in male germ line stem cell (sensu Vertebrata) in testis and 89 other cell types or tissues"/>
</dbReference>
<dbReference type="ExpressionAtlas" id="Q17R60">
    <property type="expression patterns" value="baseline and differential"/>
</dbReference>
<dbReference type="GO" id="GO:0031012">
    <property type="term" value="C:extracellular matrix"/>
    <property type="evidence" value="ECO:0000304"/>
    <property type="project" value="ProtInc"/>
</dbReference>
<dbReference type="GO" id="GO:0005576">
    <property type="term" value="C:extracellular region"/>
    <property type="evidence" value="ECO:0007669"/>
    <property type="project" value="UniProtKB-KW"/>
</dbReference>
<dbReference type="GO" id="GO:0033165">
    <property type="term" value="C:interphotoreceptor matrix"/>
    <property type="evidence" value="ECO:0007669"/>
    <property type="project" value="UniProtKB-SubCell"/>
</dbReference>
<dbReference type="GO" id="GO:0001917">
    <property type="term" value="C:photoreceptor inner segment"/>
    <property type="evidence" value="ECO:0007669"/>
    <property type="project" value="UniProtKB-SubCell"/>
</dbReference>
<dbReference type="GO" id="GO:0001750">
    <property type="term" value="C:photoreceptor outer segment"/>
    <property type="evidence" value="ECO:0007669"/>
    <property type="project" value="UniProtKB-SubCell"/>
</dbReference>
<dbReference type="GO" id="GO:0035374">
    <property type="term" value="F:chondroitin sulfate binding"/>
    <property type="evidence" value="ECO:0000250"/>
    <property type="project" value="UniProtKB"/>
</dbReference>
<dbReference type="GO" id="GO:0005201">
    <property type="term" value="F:extracellular matrix structural constituent"/>
    <property type="evidence" value="ECO:0000304"/>
    <property type="project" value="ProtInc"/>
</dbReference>
<dbReference type="GO" id="GO:0008201">
    <property type="term" value="F:heparin binding"/>
    <property type="evidence" value="ECO:0000250"/>
    <property type="project" value="UniProtKB"/>
</dbReference>
<dbReference type="GO" id="GO:0005540">
    <property type="term" value="F:hyaluronic acid binding"/>
    <property type="evidence" value="ECO:0000250"/>
    <property type="project" value="UniProtKB"/>
</dbReference>
<dbReference type="GO" id="GO:0030198">
    <property type="term" value="P:extracellular matrix organization"/>
    <property type="evidence" value="ECO:0007669"/>
    <property type="project" value="Ensembl"/>
</dbReference>
<dbReference type="GO" id="GO:0007601">
    <property type="term" value="P:visual perception"/>
    <property type="evidence" value="ECO:0000304"/>
    <property type="project" value="ProtInc"/>
</dbReference>
<dbReference type="FunFam" id="3.30.70.960:FF:000009">
    <property type="entry name" value="Interphotoreceptor matrix proteoglycan 1"/>
    <property type="match status" value="1"/>
</dbReference>
<dbReference type="Gene3D" id="3.30.70.960">
    <property type="entry name" value="SEA domain"/>
    <property type="match status" value="2"/>
</dbReference>
<dbReference type="InterPro" id="IPR000742">
    <property type="entry name" value="EGF-like_dom"/>
</dbReference>
<dbReference type="InterPro" id="IPR039861">
    <property type="entry name" value="IMPG"/>
</dbReference>
<dbReference type="InterPro" id="IPR000082">
    <property type="entry name" value="SEA_dom"/>
</dbReference>
<dbReference type="InterPro" id="IPR036364">
    <property type="entry name" value="SEA_dom_sf"/>
</dbReference>
<dbReference type="PANTHER" id="PTHR12199">
    <property type="entry name" value="INTERPHOTORECEPTOR MATRIX PROTEOGLYCAN"/>
    <property type="match status" value="1"/>
</dbReference>
<dbReference type="PANTHER" id="PTHR12199:SF3">
    <property type="entry name" value="INTERPHOTORECEPTOR MATRIX PROTEOGLYCAN 1"/>
    <property type="match status" value="1"/>
</dbReference>
<dbReference type="Pfam" id="PF01390">
    <property type="entry name" value="SEA"/>
    <property type="match status" value="2"/>
</dbReference>
<dbReference type="SMART" id="SM00200">
    <property type="entry name" value="SEA"/>
    <property type="match status" value="2"/>
</dbReference>
<dbReference type="SUPFAM" id="SSF82671">
    <property type="entry name" value="SEA domain"/>
    <property type="match status" value="2"/>
</dbReference>
<dbReference type="PROSITE" id="PS50024">
    <property type="entry name" value="SEA"/>
    <property type="match status" value="2"/>
</dbReference>
<evidence type="ECO:0000250" key="1">
    <source>
        <dbReference type="UniProtKB" id="Q8JIR8"/>
    </source>
</evidence>
<evidence type="ECO:0000250" key="2">
    <source>
        <dbReference type="UniProtKB" id="Q8R1W8"/>
    </source>
</evidence>
<evidence type="ECO:0000255" key="3"/>
<evidence type="ECO:0000255" key="4">
    <source>
        <dbReference type="PROSITE-ProRule" id="PRU00188"/>
    </source>
</evidence>
<evidence type="ECO:0000269" key="5">
    <source>
    </source>
</evidence>
<evidence type="ECO:0000269" key="6">
    <source>
    </source>
</evidence>
<evidence type="ECO:0000269" key="7">
    <source>
    </source>
</evidence>
<evidence type="ECO:0000269" key="8">
    <source>
    </source>
</evidence>
<evidence type="ECO:0000269" key="9">
    <source>
    </source>
</evidence>
<evidence type="ECO:0000269" key="10">
    <source>
    </source>
</evidence>
<evidence type="ECO:0000269" key="11">
    <source>
    </source>
</evidence>
<evidence type="ECO:0000269" key="12">
    <source>
    </source>
</evidence>
<evidence type="ECO:0000269" key="13">
    <source>
    </source>
</evidence>
<evidence type="ECO:0000269" key="14">
    <source>
    </source>
</evidence>
<evidence type="ECO:0000269" key="15">
    <source>
    </source>
</evidence>
<evidence type="ECO:0000303" key="16">
    <source>
    </source>
</evidence>
<evidence type="ECO:0000303" key="17">
    <source>
    </source>
</evidence>
<evidence type="ECO:0000305" key="18"/>
<evidence type="ECO:0000312" key="19">
    <source>
        <dbReference type="EMBL" id="AAC03789.2"/>
    </source>
</evidence>
<evidence type="ECO:0000312" key="20">
    <source>
        <dbReference type="EMBL" id="AAC68835.1"/>
    </source>
</evidence>
<evidence type="ECO:0000312" key="21">
    <source>
        <dbReference type="EMBL" id="AAI17451.1"/>
    </source>
</evidence>
<evidence type="ECO:0000312" key="22">
    <source>
        <dbReference type="EMBL" id="AAI17453.1"/>
    </source>
</evidence>
<evidence type="ECO:0000312" key="23">
    <source>
        <dbReference type="EMBL" id="AL356962"/>
    </source>
</evidence>
<proteinExistence type="evidence at protein level"/>
<organism>
    <name type="scientific">Homo sapiens</name>
    <name type="common">Human</name>
    <dbReference type="NCBI Taxonomy" id="9606"/>
    <lineage>
        <taxon>Eukaryota</taxon>
        <taxon>Metazoa</taxon>
        <taxon>Chordata</taxon>
        <taxon>Craniata</taxon>
        <taxon>Vertebrata</taxon>
        <taxon>Euteleostomi</taxon>
        <taxon>Mammalia</taxon>
        <taxon>Eutheria</taxon>
        <taxon>Euarchontoglires</taxon>
        <taxon>Primates</taxon>
        <taxon>Haplorrhini</taxon>
        <taxon>Catarrhini</taxon>
        <taxon>Hominidae</taxon>
        <taxon>Homo</taxon>
    </lineage>
</organism>
<reference evidence="20" key="1">
    <citation type="journal article" date="1998" name="Cytogenet. Cell Genet.">
        <title>Genomic organization and chromosomal localization of the interphotoreceptor matrix proteoglycan-1 (IMPG1) gene: a candidate for 6q-linked retinopathies.</title>
        <authorList>
            <person name="Felbor U."/>
            <person name="Gehrig A."/>
            <person name="Sauer C.G."/>
            <person name="Marquardt A."/>
            <person name="Koehler M."/>
            <person name="Schmid M."/>
            <person name="Weber B.H.F."/>
        </authorList>
    </citation>
    <scope>NUCLEOTIDE SEQUENCE [GENOMIC DNA]</scope>
</reference>
<reference evidence="18 19" key="2">
    <citation type="journal article" date="1999" name="Matrix Biol.">
        <title>Expression and characterization of the IPM 150 gene (IMPG1) product, a novel human photoreceptor cell-associated chondroitin-sulfate proteoglycan.</title>
        <authorList>
            <person name="Kuehn M.H."/>
            <person name="Hageman G.S."/>
        </authorList>
    </citation>
    <scope>NUCLEOTIDE SEQUENCE [MRNA] (ISOFORM 1)</scope>
    <scope>PROTEIN SEQUENCE OF 71-90</scope>
    <scope>TISSUE SPECIFICITY</scope>
    <source>
        <tissue evidence="19">Retina</tissue>
    </source>
</reference>
<reference key="3">
    <citation type="journal article" date="2007" name="BMC Genomics">
        <title>The full-ORF clone resource of the German cDNA consortium.</title>
        <authorList>
            <person name="Bechtel S."/>
            <person name="Rosenfelder H."/>
            <person name="Duda A."/>
            <person name="Schmidt C.P."/>
            <person name="Ernst U."/>
            <person name="Wellenreuther R."/>
            <person name="Mehrle A."/>
            <person name="Schuster C."/>
            <person name="Bahr A."/>
            <person name="Bloecker H."/>
            <person name="Heubner D."/>
            <person name="Hoerlein A."/>
            <person name="Michel G."/>
            <person name="Wedler H."/>
            <person name="Koehrer K."/>
            <person name="Ottenwaelder B."/>
            <person name="Poustka A."/>
            <person name="Wiemann S."/>
            <person name="Schupp I."/>
        </authorList>
    </citation>
    <scope>NUCLEOTIDE SEQUENCE [LARGE SCALE MRNA] (ISOFORM 2)</scope>
    <source>
        <tissue>Retina</tissue>
    </source>
</reference>
<reference evidence="23" key="4">
    <citation type="journal article" date="2003" name="Nature">
        <title>The DNA sequence and analysis of human chromosome 6.</title>
        <authorList>
            <person name="Mungall A.J."/>
            <person name="Palmer S.A."/>
            <person name="Sims S.K."/>
            <person name="Edwards C.A."/>
            <person name="Ashurst J.L."/>
            <person name="Wilming L."/>
            <person name="Jones M.C."/>
            <person name="Horton R."/>
            <person name="Hunt S.E."/>
            <person name="Scott C.E."/>
            <person name="Gilbert J.G.R."/>
            <person name="Clamp M.E."/>
            <person name="Bethel G."/>
            <person name="Milne S."/>
            <person name="Ainscough R."/>
            <person name="Almeida J.P."/>
            <person name="Ambrose K.D."/>
            <person name="Andrews T.D."/>
            <person name="Ashwell R.I.S."/>
            <person name="Babbage A.K."/>
            <person name="Bagguley C.L."/>
            <person name="Bailey J."/>
            <person name="Banerjee R."/>
            <person name="Barker D.J."/>
            <person name="Barlow K.F."/>
            <person name="Bates K."/>
            <person name="Beare D.M."/>
            <person name="Beasley H."/>
            <person name="Beasley O."/>
            <person name="Bird C.P."/>
            <person name="Blakey S.E."/>
            <person name="Bray-Allen S."/>
            <person name="Brook J."/>
            <person name="Brown A.J."/>
            <person name="Brown J.Y."/>
            <person name="Burford D.C."/>
            <person name="Burrill W."/>
            <person name="Burton J."/>
            <person name="Carder C."/>
            <person name="Carter N.P."/>
            <person name="Chapman J.C."/>
            <person name="Clark S.Y."/>
            <person name="Clark G."/>
            <person name="Clee C.M."/>
            <person name="Clegg S."/>
            <person name="Cobley V."/>
            <person name="Collier R.E."/>
            <person name="Collins J.E."/>
            <person name="Colman L.K."/>
            <person name="Corby N.R."/>
            <person name="Coville G.J."/>
            <person name="Culley K.M."/>
            <person name="Dhami P."/>
            <person name="Davies J."/>
            <person name="Dunn M."/>
            <person name="Earthrowl M.E."/>
            <person name="Ellington A.E."/>
            <person name="Evans K.A."/>
            <person name="Faulkner L."/>
            <person name="Francis M.D."/>
            <person name="Frankish A."/>
            <person name="Frankland J."/>
            <person name="French L."/>
            <person name="Garner P."/>
            <person name="Garnett J."/>
            <person name="Ghori M.J."/>
            <person name="Gilby L.M."/>
            <person name="Gillson C.J."/>
            <person name="Glithero R.J."/>
            <person name="Grafham D.V."/>
            <person name="Grant M."/>
            <person name="Gribble S."/>
            <person name="Griffiths C."/>
            <person name="Griffiths M.N.D."/>
            <person name="Hall R."/>
            <person name="Halls K.S."/>
            <person name="Hammond S."/>
            <person name="Harley J.L."/>
            <person name="Hart E.A."/>
            <person name="Heath P.D."/>
            <person name="Heathcott R."/>
            <person name="Holmes S.J."/>
            <person name="Howden P.J."/>
            <person name="Howe K.L."/>
            <person name="Howell G.R."/>
            <person name="Huckle E."/>
            <person name="Humphray S.J."/>
            <person name="Humphries M.D."/>
            <person name="Hunt A.R."/>
            <person name="Johnson C.M."/>
            <person name="Joy A.A."/>
            <person name="Kay M."/>
            <person name="Keenan S.J."/>
            <person name="Kimberley A.M."/>
            <person name="King A."/>
            <person name="Laird G.K."/>
            <person name="Langford C."/>
            <person name="Lawlor S."/>
            <person name="Leongamornlert D.A."/>
            <person name="Leversha M."/>
            <person name="Lloyd C.R."/>
            <person name="Lloyd D.M."/>
            <person name="Loveland J.E."/>
            <person name="Lovell J."/>
            <person name="Martin S."/>
            <person name="Mashreghi-Mohammadi M."/>
            <person name="Maslen G.L."/>
            <person name="Matthews L."/>
            <person name="McCann O.T."/>
            <person name="McLaren S.J."/>
            <person name="McLay K."/>
            <person name="McMurray A."/>
            <person name="Moore M.J.F."/>
            <person name="Mullikin J.C."/>
            <person name="Niblett D."/>
            <person name="Nickerson T."/>
            <person name="Novik K.L."/>
            <person name="Oliver K."/>
            <person name="Overton-Larty E.K."/>
            <person name="Parker A."/>
            <person name="Patel R."/>
            <person name="Pearce A.V."/>
            <person name="Peck A.I."/>
            <person name="Phillimore B.J.C.T."/>
            <person name="Phillips S."/>
            <person name="Plumb R.W."/>
            <person name="Porter K.M."/>
            <person name="Ramsey Y."/>
            <person name="Ranby S.A."/>
            <person name="Rice C.M."/>
            <person name="Ross M.T."/>
            <person name="Searle S.M."/>
            <person name="Sehra H.K."/>
            <person name="Sheridan E."/>
            <person name="Skuce C.D."/>
            <person name="Smith S."/>
            <person name="Smith M."/>
            <person name="Spraggon L."/>
            <person name="Squares S.L."/>
            <person name="Steward C.A."/>
            <person name="Sycamore N."/>
            <person name="Tamlyn-Hall G."/>
            <person name="Tester J."/>
            <person name="Theaker A.J."/>
            <person name="Thomas D.W."/>
            <person name="Thorpe A."/>
            <person name="Tracey A."/>
            <person name="Tromans A."/>
            <person name="Tubby B."/>
            <person name="Wall M."/>
            <person name="Wallis J.M."/>
            <person name="West A.P."/>
            <person name="White S.S."/>
            <person name="Whitehead S.L."/>
            <person name="Whittaker H."/>
            <person name="Wild A."/>
            <person name="Willey D.J."/>
            <person name="Wilmer T.E."/>
            <person name="Wood J.M."/>
            <person name="Wray P.W."/>
            <person name="Wyatt J.C."/>
            <person name="Young L."/>
            <person name="Younger R.M."/>
            <person name="Bentley D.R."/>
            <person name="Coulson A."/>
            <person name="Durbin R.M."/>
            <person name="Hubbard T."/>
            <person name="Sulston J.E."/>
            <person name="Dunham I."/>
            <person name="Rogers J."/>
            <person name="Beck S."/>
        </authorList>
    </citation>
    <scope>NUCLEOTIDE SEQUENCE [LARGE SCALE GENOMIC DNA]</scope>
</reference>
<reference key="5">
    <citation type="submission" date="2005-09" db="EMBL/GenBank/DDBJ databases">
        <authorList>
            <person name="Mural R.J."/>
            <person name="Istrail S."/>
            <person name="Sutton G.G."/>
            <person name="Florea L."/>
            <person name="Halpern A.L."/>
            <person name="Mobarry C.M."/>
            <person name="Lippert R."/>
            <person name="Walenz B."/>
            <person name="Shatkay H."/>
            <person name="Dew I."/>
            <person name="Miller J.R."/>
            <person name="Flanigan M.J."/>
            <person name="Edwards N.J."/>
            <person name="Bolanos R."/>
            <person name="Fasulo D."/>
            <person name="Halldorsson B.V."/>
            <person name="Hannenhalli S."/>
            <person name="Turner R."/>
            <person name="Yooseph S."/>
            <person name="Lu F."/>
            <person name="Nusskern D.R."/>
            <person name="Shue B.C."/>
            <person name="Zheng X.H."/>
            <person name="Zhong F."/>
            <person name="Delcher A.L."/>
            <person name="Huson D.H."/>
            <person name="Kravitz S.A."/>
            <person name="Mouchard L."/>
            <person name="Reinert K."/>
            <person name="Remington K.A."/>
            <person name="Clark A.G."/>
            <person name="Waterman M.S."/>
            <person name="Eichler E.E."/>
            <person name="Adams M.D."/>
            <person name="Hunkapiller M.W."/>
            <person name="Myers E.W."/>
            <person name="Venter J.C."/>
        </authorList>
    </citation>
    <scope>NUCLEOTIDE SEQUENCE [LARGE SCALE GENOMIC DNA]</scope>
</reference>
<reference evidence="18 21" key="6">
    <citation type="journal article" date="2004" name="Genome Res.">
        <title>The status, quality, and expansion of the NIH full-length cDNA project: the Mammalian Gene Collection (MGC).</title>
        <authorList>
            <consortium name="The MGC Project Team"/>
        </authorList>
    </citation>
    <scope>NUCLEOTIDE SEQUENCE [LARGE SCALE MRNA] (ISOFORM 1)</scope>
    <scope>VARIANTS ASP-518 AND TRP-704</scope>
    <source>
        <tissue evidence="21">Brain</tissue>
    </source>
</reference>
<reference evidence="18" key="7">
    <citation type="journal article" date="1998" name="J. Biol. Chem.">
        <title>SPACR, a novel interphotoreceptor matrix glycoprotein in human retina that interacts with hyaluronan.</title>
        <authorList>
            <person name="Acharya S."/>
            <person name="Rodriguez I.R."/>
            <person name="Moreira E.F."/>
            <person name="Midura R.J."/>
            <person name="Misono K."/>
            <person name="Todres E."/>
            <person name="Hollyfield J.G."/>
        </authorList>
    </citation>
    <scope>PROTEIN SEQUENCE OF 71-79; 101-111; 249-265 AND 622-629</scope>
    <scope>FUNCTION</scope>
    <scope>SUBCELLULAR LOCATION</scope>
    <scope>TISSUE SPECIFICITY</scope>
    <scope>IDENTIFICATION BY MASS SPECTROMETRY</scope>
</reference>
<reference evidence="18" key="8">
    <citation type="journal article" date="1998" name="Glycobiology">
        <title>Characterization of SPACR, a sialoprotein associated with cones and rods present in the interphotoreceptor matrix of the human retina: immunological and lectin binding analysis.</title>
        <authorList>
            <person name="Acharya S."/>
            <person name="Rayborn M.E."/>
            <person name="Hollyfield J.G."/>
        </authorList>
    </citation>
    <scope>SUBCELLULAR LOCATION</scope>
    <scope>TISSUE SPECIFICITY</scope>
    <scope>GLYCOSYLATION</scope>
</reference>
<reference key="9">
    <citation type="journal article" date="2018" name="Acta Biomater.">
        <title>Extracellular matrix component expression in human pluripotent stem cell-derived retinal organoids recapitulates retinogenesis in vivo and reveals an important role for IMPG1 and CD44 in the development of photoreceptors and interphotoreceptor matrix.</title>
        <authorList>
            <person name="Felemban M."/>
            <person name="Dorgau B."/>
            <person name="Hunt N.C."/>
            <person name="Hallam D."/>
            <person name="Zerti D."/>
            <person name="Bauer R."/>
            <person name="Ding Y."/>
            <person name="Collin J."/>
            <person name="Steel D."/>
            <person name="Krasnogor N."/>
            <person name="Al-Aama J."/>
            <person name="Lindsay S."/>
            <person name="Mellough C."/>
            <person name="Lako M."/>
        </authorList>
    </citation>
    <scope>SUBCELLULAR LOCATION</scope>
    <scope>TISSUE SPECIFICITY</scope>
    <scope>DEVELOPMENTAL STAGE</scope>
</reference>
<reference key="10">
    <citation type="journal article" date="2004" name="Invest. Ophthalmol. Vis. Sci.">
        <title>The benign concentric annular macular dystrophy locus maps to 6p12.3-q16.</title>
        <authorList>
            <person name="van Lith-Verhoeven J.J."/>
            <person name="Hoyng C.B."/>
            <person name="van den Helm B."/>
            <person name="Deutman A.F."/>
            <person name="Brink H.M."/>
            <person name="Kemperman M.H."/>
            <person name="de Jong W.H."/>
            <person name="Kremer H."/>
            <person name="Cremers F.P."/>
        </authorList>
    </citation>
    <scope>INVOLVEMENT IN RP91</scope>
    <scope>VARIANT RP91 PRO-579</scope>
</reference>
<reference key="11">
    <citation type="journal article" date="2013" name="Am. J. Hum. Genet.">
        <title>Mutations in IMPG1 cause vitelliform macular dystrophies.</title>
        <authorList>
            <person name="Manes G."/>
            <person name="Meunier I."/>
            <person name="Avila-Fernandez A."/>
            <person name="Banfi S."/>
            <person name="Le Meur G."/>
            <person name="Zanlonghi X."/>
            <person name="Corton M."/>
            <person name="Simonelli F."/>
            <person name="Brabet P."/>
            <person name="Labesse G."/>
            <person name="Audo I."/>
            <person name="Mohand-Said S."/>
            <person name="Zeitz C."/>
            <person name="Sahel J.A."/>
            <person name="Weber M."/>
            <person name="Dollfus H."/>
            <person name="Dhaenens C.M."/>
            <person name="Allorge D."/>
            <person name="De Baere E."/>
            <person name="Koenekoop R.K."/>
            <person name="Kohl S."/>
            <person name="Cremers F.P."/>
            <person name="Hollyfield J.G."/>
            <person name="Senechal A."/>
            <person name="Hebrard M."/>
            <person name="Bocquet B."/>
            <person name="Ayuso Garcia C."/>
            <person name="Hamel C.P."/>
        </authorList>
    </citation>
    <scope>INVOLVEMENT IN VMD4</scope>
    <scope>VARIANTS VMD4 PRO-154 AND ARG-238</scope>
</reference>
<reference key="12">
    <citation type="journal article" date="2014" name="Ophthalmology">
        <title>Frequency and clinical pattern of vitelliform macular dystrophy caused by mutations of interphotoreceptor matrix IMPG1 and IMPG2 genes.</title>
        <authorList>
            <person name="Meunier I."/>
            <person name="Manes G."/>
            <person name="Bocquet B."/>
            <person name="Marquette V."/>
            <person name="Baudoin C."/>
            <person name="Puech B."/>
            <person name="Defoort-Dhellemmes S."/>
            <person name="Audo I."/>
            <person name="Verdet R."/>
            <person name="Arndt C."/>
            <person name="Zanlonghi X."/>
            <person name="Le Meur G."/>
            <person name="Dhaenens C.M."/>
            <person name="Hamel C.P."/>
        </authorList>
    </citation>
    <scope>VARIANT VMD4 ARG-238</scope>
</reference>
<reference key="13">
    <citation type="journal article" date="2017" name="Genes (Basel)">
        <title>Mutations in the Genes for Interphotoreceptor Matrix Proteoglycans, IMPG1 and IMPG2, in Patients with Vitelliform Macular Lesions.</title>
        <authorList>
            <person name="Brandl C."/>
            <person name="Schulz H.L."/>
            <person name="Charbel Issa P."/>
            <person name="Birtel J."/>
            <person name="Bergholz R."/>
            <person name="Lange C."/>
            <person name="Dahlke C."/>
            <person name="Zobor D."/>
            <person name="Weber B.H.F."/>
            <person name="Stoehr H."/>
        </authorList>
    </citation>
    <scope>VARIANT PRO-238</scope>
</reference>
<reference key="14">
    <citation type="journal article" date="2021" name="J. Med. Genet.">
        <title>Pathogenic variants in IMPG1 cause autosomal dominant and autosomal recessive retinitis pigmentosa.</title>
        <authorList>
            <person name="Olivier G."/>
            <person name="Corton M."/>
            <person name="Intartaglia D."/>
            <person name="Verbakel S.K."/>
            <person name="Sergouniotis P.I."/>
            <person name="Le Meur G."/>
            <person name="Dhaenens C.M."/>
            <person name="Naacke H."/>
            <person name="Avila-Fernandez A."/>
            <person name="Hoyng C.B."/>
            <person name="Klevering J."/>
            <person name="Bocquet B."/>
            <person name="Roubertie A."/>
            <person name="Senechal A."/>
            <person name="Banfi S."/>
            <person name="Muller A."/>
            <person name="Hamel C.L."/>
            <person name="Black G.C."/>
            <person name="Conte I."/>
            <person name="Roosing S."/>
            <person name="Zanlonghi X."/>
            <person name="Ayuso C."/>
            <person name="Meunier I."/>
            <person name="Manes G."/>
        </authorList>
    </citation>
    <scope>INVOLVEMENT IN RP91</scope>
    <scope>VARIANTS RP91 PRO-579; PRO-613 AND PHE-626</scope>
</reference>
<reference key="15">
    <citation type="journal article" date="2021" name="Retin. Cases Brief Rep.">
        <title>Unusual early-onset vitelliform dystrophy possibly linked to the interphotoreceptor matrix proteoglycan-1 p.Leu154Pro mutation.</title>
        <authorList>
            <person name="Gupta M.P."/>
            <person name="Brodie S.E."/>
            <person name="Freund K.B."/>
        </authorList>
    </citation>
    <scope>VARIANT VMD4 PRO-154</scope>
</reference>
<name>IMPG1_HUMAN</name>
<gene>
    <name evidence="22" type="primary">IMPG1</name>
    <name evidence="20" type="synonym">IPM150</name>
    <name evidence="17" type="synonym">SPACR</name>
</gene>
<sequence>MYLETRRAIFVFWIFLQVQGTKDISINIYHSETKDIDNPPRNETTESTEKMYKMSTMRRIFDLAKHRTKRSAFFPTGVKVCPQESMKQILDSLQAYYRLRVCQEAVWEAYRIFLDRIPDTGEYQDWVSICQQETFCLFDIGKNFSNSQEHLDLLQQRIKQRSFPDRKDEISAEKTLGEPGETIVISTDVANVSLGPFPLTPDDTLLNEILDNTLNDTKMPTTERETEFAVLEEQRVELSVSLVNQKFKAELADSQSPYYQELAGKSQLQMQKIFKKLPGFKKIHVLGFRPKKEKDGSSSTEMQLTAIFKRHSAEAKSPASDLLSFDSNKIESEEVYHGTMEEDKQPEIYLTATDLKRLISKALEEEQSLDVGTIQFTDEIAGSLPAFGPDTQSELPTSFAVITEDATLSPELPPVEPQLETVDGAEHGLPDTSWSPPAMASTSLSEAPPFFMASSIFSLTDQGTTDTMATDQTMLVPGLTIPTSDYSAISQLALGISHPPASSDDSRSSAGGEDMVRHLDEMDLSDTPAPSEVPELSEYVSVPDHFLEDTTPVSALQYITTSSMTIAPKGRELVVFFSLRVANMAFSNDLFNKSSLEYRALEQQFTQLLVPYLRSNLTGFKQLEILNFRNGSVIVNSKMKFAKSVPYNLTKAVHGVLEDFRSAAAQQLHLEIDSYSLNIEPADQADPCKFLACGEFAQCVKNERTEEAECRCKPGYDSQGSLDGLEPGLCGPGTKECEVLQGKGAPCRLPDHSENQAYKTSVKKFQNQQNNKVISKRNSELLTVEYEEFNHQDWEGN</sequence>